<dbReference type="EMBL" id="CU928179">
    <property type="protein sequence ID" value="CAR29623.1"/>
    <property type="molecule type" value="Genomic_DNA"/>
</dbReference>
<dbReference type="RefSeq" id="XP_002498556.1">
    <property type="nucleotide sequence ID" value="XM_002498511.1"/>
</dbReference>
<dbReference type="SMR" id="C5E0I9"/>
<dbReference type="FunCoup" id="C5E0I9">
    <property type="interactions" value="271"/>
</dbReference>
<dbReference type="STRING" id="559307.C5E0I9"/>
<dbReference type="GeneID" id="8206372"/>
<dbReference type="KEGG" id="zro:ZYRO0G13112g"/>
<dbReference type="HOGENOM" id="CLU_022670_2_0_1"/>
<dbReference type="InParanoid" id="C5E0I9"/>
<dbReference type="Proteomes" id="UP000008536">
    <property type="component" value="Chromosome G"/>
</dbReference>
<dbReference type="GO" id="GO:0000781">
    <property type="term" value="C:chromosome, telomeric region"/>
    <property type="evidence" value="ECO:0007669"/>
    <property type="project" value="UniProtKB-SubCell"/>
</dbReference>
<dbReference type="GO" id="GO:0005634">
    <property type="term" value="C:nucleus"/>
    <property type="evidence" value="ECO:0007669"/>
    <property type="project" value="UniProtKB-SubCell"/>
</dbReference>
<dbReference type="GO" id="GO:0000932">
    <property type="term" value="C:P-body"/>
    <property type="evidence" value="ECO:0007669"/>
    <property type="project" value="UniProtKB-SubCell"/>
</dbReference>
<dbReference type="GO" id="GO:0003723">
    <property type="term" value="F:RNA binding"/>
    <property type="evidence" value="ECO:0007669"/>
    <property type="project" value="UniProtKB-KW"/>
</dbReference>
<dbReference type="GO" id="GO:0006325">
    <property type="term" value="P:chromatin organization"/>
    <property type="evidence" value="ECO:0007669"/>
    <property type="project" value="UniProtKB-KW"/>
</dbReference>
<dbReference type="GO" id="GO:0051028">
    <property type="term" value="P:mRNA transport"/>
    <property type="evidence" value="ECO:0007669"/>
    <property type="project" value="UniProtKB-KW"/>
</dbReference>
<dbReference type="GO" id="GO:0006417">
    <property type="term" value="P:regulation of translation"/>
    <property type="evidence" value="ECO:0007669"/>
    <property type="project" value="UniProtKB-KW"/>
</dbReference>
<dbReference type="CDD" id="cd00105">
    <property type="entry name" value="KH-I"/>
    <property type="match status" value="1"/>
</dbReference>
<dbReference type="Gene3D" id="3.30.1370.10">
    <property type="entry name" value="K Homology domain, type 1"/>
    <property type="match status" value="3"/>
</dbReference>
<dbReference type="InterPro" id="IPR004087">
    <property type="entry name" value="KH_dom"/>
</dbReference>
<dbReference type="InterPro" id="IPR004088">
    <property type="entry name" value="KH_dom_type_1"/>
</dbReference>
<dbReference type="InterPro" id="IPR036612">
    <property type="entry name" value="KH_dom_type_1_sf"/>
</dbReference>
<dbReference type="PANTHER" id="PTHR10288">
    <property type="entry name" value="KH DOMAIN CONTAINING RNA BINDING PROTEIN"/>
    <property type="match status" value="1"/>
</dbReference>
<dbReference type="Pfam" id="PF00013">
    <property type="entry name" value="KH_1"/>
    <property type="match status" value="2"/>
</dbReference>
<dbReference type="SMART" id="SM00322">
    <property type="entry name" value="KH"/>
    <property type="match status" value="3"/>
</dbReference>
<dbReference type="SUPFAM" id="SSF54791">
    <property type="entry name" value="Eukaryotic type KH-domain (KH-domain type I)"/>
    <property type="match status" value="3"/>
</dbReference>
<dbReference type="PROSITE" id="PS50084">
    <property type="entry name" value="KH_TYPE_1"/>
    <property type="match status" value="3"/>
</dbReference>
<accession>C5E0I9</accession>
<keyword id="KW-0156">Chromatin regulator</keyword>
<keyword id="KW-0158">Chromosome</keyword>
<keyword id="KW-0963">Cytoplasm</keyword>
<keyword id="KW-0509">mRNA transport</keyword>
<keyword id="KW-0539">Nucleus</keyword>
<keyword id="KW-1185">Reference proteome</keyword>
<keyword id="KW-0677">Repeat</keyword>
<keyword id="KW-0694">RNA-binding</keyword>
<keyword id="KW-0779">Telomere</keyword>
<keyword id="KW-0810">Translation regulation</keyword>
<keyword id="KW-0813">Transport</keyword>
<sequence>MSDINDPNSISLPVGSSCTSRGASTETFTTSRSTTLFSSQQESKDEGNVELRESITLPTINHRVLLSLKESAKVIGTKGSTIQNVREINHVKIGLSEKQLGCSDRVLSCAGRIINVAHSLGQIVSVLKEGSTVSSAEKYAFHFLNPILPPPTRDEFQDLTLDEINKIGTSRLMVTNSQLSSIIGKGGARIKSLKERHRVKIVASRDFLPDSDERILEIQGLPNAITNVLLQISKILLNELDITFASERRYYPHLRSSSPSNAVSLAASTSGVQTGASNYLNNEFKATLKIPESYVGAIAGRRGNRIANLRKFTKTKIIVEKKIDKTVIDVDPDNRTFIILGDHFKNVKLAESMLLKNLDVEIEKRKSRLAKK</sequence>
<organism>
    <name type="scientific">Zygosaccharomyces rouxii (strain ATCC 2623 / CBS 732 / NBRC 1130 / NCYC 568 / NRRL Y-229)</name>
    <dbReference type="NCBI Taxonomy" id="559307"/>
    <lineage>
        <taxon>Eukaryota</taxon>
        <taxon>Fungi</taxon>
        <taxon>Dikarya</taxon>
        <taxon>Ascomycota</taxon>
        <taxon>Saccharomycotina</taxon>
        <taxon>Saccharomycetes</taxon>
        <taxon>Saccharomycetales</taxon>
        <taxon>Saccharomycetaceae</taxon>
        <taxon>Zygosaccharomyces</taxon>
    </lineage>
</organism>
<proteinExistence type="inferred from homology"/>
<reference key="1">
    <citation type="journal article" date="2009" name="Genome Res.">
        <title>Comparative genomics of protoploid Saccharomycetaceae.</title>
        <authorList>
            <consortium name="The Genolevures Consortium"/>
            <person name="Souciet J.-L."/>
            <person name="Dujon B."/>
            <person name="Gaillardin C."/>
            <person name="Johnston M."/>
            <person name="Baret P.V."/>
            <person name="Cliften P."/>
            <person name="Sherman D.J."/>
            <person name="Weissenbach J."/>
            <person name="Westhof E."/>
            <person name="Wincker P."/>
            <person name="Jubin C."/>
            <person name="Poulain J."/>
            <person name="Barbe V."/>
            <person name="Segurens B."/>
            <person name="Artiguenave F."/>
            <person name="Anthouard V."/>
            <person name="Vacherie B."/>
            <person name="Val M.-E."/>
            <person name="Fulton R.S."/>
            <person name="Minx P."/>
            <person name="Wilson R."/>
            <person name="Durrens P."/>
            <person name="Jean G."/>
            <person name="Marck C."/>
            <person name="Martin T."/>
            <person name="Nikolski M."/>
            <person name="Rolland T."/>
            <person name="Seret M.-L."/>
            <person name="Casaregola S."/>
            <person name="Despons L."/>
            <person name="Fairhead C."/>
            <person name="Fischer G."/>
            <person name="Lafontaine I."/>
            <person name="Leh V."/>
            <person name="Lemaire M."/>
            <person name="de Montigny J."/>
            <person name="Neuveglise C."/>
            <person name="Thierry A."/>
            <person name="Blanc-Lenfle I."/>
            <person name="Bleykasten C."/>
            <person name="Diffels J."/>
            <person name="Fritsch E."/>
            <person name="Frangeul L."/>
            <person name="Goeffon A."/>
            <person name="Jauniaux N."/>
            <person name="Kachouri-Lafond R."/>
            <person name="Payen C."/>
            <person name="Potier S."/>
            <person name="Pribylova L."/>
            <person name="Ozanne C."/>
            <person name="Richard G.-F."/>
            <person name="Sacerdot C."/>
            <person name="Straub M.-L."/>
            <person name="Talla E."/>
        </authorList>
    </citation>
    <scope>NUCLEOTIDE SEQUENCE [LARGE SCALE GENOMIC DNA]</scope>
    <source>
        <strain>ATCC 2623 / CBS 732 / BCRC 21506 / NBRC 1130 / NCYC 568 / NRRL Y-229</strain>
    </source>
</reference>
<gene>
    <name type="primary">HEK2</name>
    <name type="synonym">KHD1</name>
    <name type="ordered locus">ZYRO0G13112g</name>
</gene>
<feature type="chain" id="PRO_0000408196" description="Heterogeneous nuclear rnp K-like protein 2">
    <location>
        <begin position="1"/>
        <end position="372"/>
    </location>
</feature>
<feature type="domain" description="KH 1" evidence="2">
    <location>
        <begin position="59"/>
        <end position="123"/>
    </location>
</feature>
<feature type="domain" description="KH 2" evidence="2">
    <location>
        <begin position="167"/>
        <end position="232"/>
    </location>
</feature>
<feature type="domain" description="KH 3" evidence="2">
    <location>
        <begin position="283"/>
        <end position="354"/>
    </location>
</feature>
<feature type="region of interest" description="Disordered" evidence="3">
    <location>
        <begin position="1"/>
        <end position="49"/>
    </location>
</feature>
<feature type="compositionally biased region" description="Polar residues" evidence="3">
    <location>
        <begin position="1"/>
        <end position="23"/>
    </location>
</feature>
<feature type="compositionally biased region" description="Low complexity" evidence="3">
    <location>
        <begin position="24"/>
        <end position="39"/>
    </location>
</feature>
<evidence type="ECO:0000250" key="1"/>
<evidence type="ECO:0000255" key="2">
    <source>
        <dbReference type="PROSITE-ProRule" id="PRU00117"/>
    </source>
</evidence>
<evidence type="ECO:0000256" key="3">
    <source>
        <dbReference type="SAM" id="MobiDB-lite"/>
    </source>
</evidence>
<evidence type="ECO:0000305" key="4"/>
<protein>
    <recommendedName>
        <fullName>Heterogeneous nuclear rnp K-like protein 2</fullName>
    </recommendedName>
    <alternativeName>
        <fullName>KH domain-containing protein 1</fullName>
    </alternativeName>
</protein>
<name>HEK2_ZYGRC</name>
<comment type="function">
    <text evidence="1">RNA-binding protein involved in the correct localization of transcripts in the cell. RNA localization is a widespread mechanism for achieving localized protein synthesis. Involved in structural and functional organization of telomeric chromatin and regulates silencing at the HMR locus (By similarity).</text>
</comment>
<comment type="subunit">
    <text evidence="1">Binds RNA.</text>
</comment>
<comment type="subcellular location">
    <subcellularLocation>
        <location evidence="1">Cytoplasm</location>
    </subcellularLocation>
    <subcellularLocation>
        <location evidence="1">Cytoplasm</location>
        <location evidence="1">P-body</location>
    </subcellularLocation>
    <subcellularLocation>
        <location evidence="1">Nucleus</location>
    </subcellularLocation>
    <subcellularLocation>
        <location evidence="1">Chromosome</location>
        <location evidence="1">Telomere</location>
    </subcellularLocation>
</comment>
<comment type="similarity">
    <text evidence="4">Belongs to the HEK2 family.</text>
</comment>